<keyword id="KW-0320">Glycogen biosynthesis</keyword>
<keyword id="KW-0328">Glycosyltransferase</keyword>
<keyword id="KW-0808">Transferase</keyword>
<name>GLGA_RHIR8</name>
<protein>
    <recommendedName>
        <fullName evidence="1">Glycogen synthase</fullName>
        <ecNumber evidence="1">2.4.1.21</ecNumber>
    </recommendedName>
    <alternativeName>
        <fullName evidence="1">Starch [bacterial glycogen] synthase</fullName>
    </alternativeName>
</protein>
<sequence length="480" mass="51375">MKVLSVSSEVFPLIKTGGLADVAGALPGALNPHGIETKTLIPGYPAVMKVIRNPVARLEFADLLGEKATVFEVEHSGMSFLVLDAPAYYNRTGGPYVDATGKDYPDNWQRFAALSLAGAEIAAGQMPGWQPDLVHVHDWQSALVPVYMRYAPTPELPSVLTIHNIAFQGQFGPSIFPGLRLPAHAYSMQGIEYYGDIGFLKGGLQTAHALTTVSPSYAGEILTPEFGMGLEGVIASRAASLHGIVNGIDDGIWNPETDPMIARTYGASTLKDRAINRKQVVEHFGLDDDDGPIFCVVSRLTWQKGMDLLASISSEIVAMGGKLAILGAGDAALEGALFAAAGRHRGRVGVSAGYNEAMSHLMQAGCDAIIIPSRFEPCGLTQLYGLRYGCVPIVARTGGLNDTIIDANHAALQAKVATGIQFSPVTAEGLLQAIRRAIYLFQDRKVWTQMQKQGMKSDVSWGKSAERYAALYSRLVSRGA</sequence>
<dbReference type="EC" id="2.4.1.21" evidence="1"/>
<dbReference type="EMBL" id="CP000628">
    <property type="protein sequence ID" value="ACM27719.1"/>
    <property type="molecule type" value="Genomic_DNA"/>
</dbReference>
<dbReference type="RefSeq" id="WP_012652367.1">
    <property type="nucleotide sequence ID" value="NC_011985.1"/>
</dbReference>
<dbReference type="SMR" id="B9JAA4"/>
<dbReference type="STRING" id="311403.Arad_3872"/>
<dbReference type="CAZy" id="GT5">
    <property type="family name" value="Glycosyltransferase Family 5"/>
</dbReference>
<dbReference type="GeneID" id="86849574"/>
<dbReference type="KEGG" id="ara:Arad_3872"/>
<dbReference type="eggNOG" id="COG0297">
    <property type="taxonomic scope" value="Bacteria"/>
</dbReference>
<dbReference type="HOGENOM" id="CLU_009583_18_4_5"/>
<dbReference type="UniPathway" id="UPA00164"/>
<dbReference type="Proteomes" id="UP000001600">
    <property type="component" value="Chromosome 1"/>
</dbReference>
<dbReference type="GO" id="GO:0005829">
    <property type="term" value="C:cytosol"/>
    <property type="evidence" value="ECO:0007669"/>
    <property type="project" value="TreeGrafter"/>
</dbReference>
<dbReference type="GO" id="GO:0009011">
    <property type="term" value="F:alpha-1,4-glucan glucosyltransferase (ADP-glucose donor) activity"/>
    <property type="evidence" value="ECO:0007669"/>
    <property type="project" value="UniProtKB-UniRule"/>
</dbReference>
<dbReference type="GO" id="GO:0004373">
    <property type="term" value="F:alpha-1,4-glucan glucosyltransferase (UDP-glucose donor) activity"/>
    <property type="evidence" value="ECO:0007669"/>
    <property type="project" value="InterPro"/>
</dbReference>
<dbReference type="GO" id="GO:0005978">
    <property type="term" value="P:glycogen biosynthetic process"/>
    <property type="evidence" value="ECO:0007669"/>
    <property type="project" value="UniProtKB-UniRule"/>
</dbReference>
<dbReference type="CDD" id="cd03791">
    <property type="entry name" value="GT5_Glycogen_synthase_DULL1-like"/>
    <property type="match status" value="1"/>
</dbReference>
<dbReference type="Gene3D" id="3.40.50.2000">
    <property type="entry name" value="Glycogen Phosphorylase B"/>
    <property type="match status" value="2"/>
</dbReference>
<dbReference type="HAMAP" id="MF_00484">
    <property type="entry name" value="Glycogen_synth"/>
    <property type="match status" value="1"/>
</dbReference>
<dbReference type="InterPro" id="IPR001296">
    <property type="entry name" value="Glyco_trans_1"/>
</dbReference>
<dbReference type="InterPro" id="IPR011835">
    <property type="entry name" value="GS/SS"/>
</dbReference>
<dbReference type="InterPro" id="IPR013534">
    <property type="entry name" value="Starch_synth_cat_dom"/>
</dbReference>
<dbReference type="NCBIfam" id="TIGR02095">
    <property type="entry name" value="glgA"/>
    <property type="match status" value="1"/>
</dbReference>
<dbReference type="NCBIfam" id="NF001899">
    <property type="entry name" value="PRK00654.1-2"/>
    <property type="match status" value="1"/>
</dbReference>
<dbReference type="PANTHER" id="PTHR45825:SF11">
    <property type="entry name" value="ALPHA AMYLASE DOMAIN-CONTAINING PROTEIN"/>
    <property type="match status" value="1"/>
</dbReference>
<dbReference type="PANTHER" id="PTHR45825">
    <property type="entry name" value="GRANULE-BOUND STARCH SYNTHASE 1, CHLOROPLASTIC/AMYLOPLASTIC"/>
    <property type="match status" value="1"/>
</dbReference>
<dbReference type="Pfam" id="PF08323">
    <property type="entry name" value="Glyco_transf_5"/>
    <property type="match status" value="1"/>
</dbReference>
<dbReference type="Pfam" id="PF00534">
    <property type="entry name" value="Glycos_transf_1"/>
    <property type="match status" value="1"/>
</dbReference>
<dbReference type="SUPFAM" id="SSF53756">
    <property type="entry name" value="UDP-Glycosyltransferase/glycogen phosphorylase"/>
    <property type="match status" value="1"/>
</dbReference>
<accession>B9JAA4</accession>
<proteinExistence type="inferred from homology"/>
<reference key="1">
    <citation type="journal article" date="2009" name="J. Bacteriol.">
        <title>Genome sequences of three Agrobacterium biovars help elucidate the evolution of multichromosome genomes in bacteria.</title>
        <authorList>
            <person name="Slater S.C."/>
            <person name="Goldman B.S."/>
            <person name="Goodner B."/>
            <person name="Setubal J.C."/>
            <person name="Farrand S.K."/>
            <person name="Nester E.W."/>
            <person name="Burr T.J."/>
            <person name="Banta L."/>
            <person name="Dickerman A.W."/>
            <person name="Paulsen I."/>
            <person name="Otten L."/>
            <person name="Suen G."/>
            <person name="Welch R."/>
            <person name="Almeida N.F."/>
            <person name="Arnold F."/>
            <person name="Burton O.T."/>
            <person name="Du Z."/>
            <person name="Ewing A."/>
            <person name="Godsy E."/>
            <person name="Heisel S."/>
            <person name="Houmiel K.L."/>
            <person name="Jhaveri J."/>
            <person name="Lu J."/>
            <person name="Miller N.M."/>
            <person name="Norton S."/>
            <person name="Chen Q."/>
            <person name="Phoolcharoen W."/>
            <person name="Ohlin V."/>
            <person name="Ondrusek D."/>
            <person name="Pride N."/>
            <person name="Stricklin S.L."/>
            <person name="Sun J."/>
            <person name="Wheeler C."/>
            <person name="Wilson L."/>
            <person name="Zhu H."/>
            <person name="Wood D.W."/>
        </authorList>
    </citation>
    <scope>NUCLEOTIDE SEQUENCE [LARGE SCALE GENOMIC DNA]</scope>
    <source>
        <strain>K84 / ATCC BAA-868</strain>
    </source>
</reference>
<organism>
    <name type="scientific">Rhizobium rhizogenes (strain K84 / ATCC BAA-868)</name>
    <name type="common">Agrobacterium radiobacter</name>
    <dbReference type="NCBI Taxonomy" id="311403"/>
    <lineage>
        <taxon>Bacteria</taxon>
        <taxon>Pseudomonadati</taxon>
        <taxon>Pseudomonadota</taxon>
        <taxon>Alphaproteobacteria</taxon>
        <taxon>Hyphomicrobiales</taxon>
        <taxon>Rhizobiaceae</taxon>
        <taxon>Rhizobium/Agrobacterium group</taxon>
        <taxon>Rhizobium</taxon>
    </lineage>
</organism>
<comment type="function">
    <text evidence="1">Synthesizes alpha-1,4-glucan chains using ADP-glucose.</text>
</comment>
<comment type="catalytic activity">
    <reaction evidence="1">
        <text>[(1-&gt;4)-alpha-D-glucosyl](n) + ADP-alpha-D-glucose = [(1-&gt;4)-alpha-D-glucosyl](n+1) + ADP + H(+)</text>
        <dbReference type="Rhea" id="RHEA:18189"/>
        <dbReference type="Rhea" id="RHEA-COMP:9584"/>
        <dbReference type="Rhea" id="RHEA-COMP:9587"/>
        <dbReference type="ChEBI" id="CHEBI:15378"/>
        <dbReference type="ChEBI" id="CHEBI:15444"/>
        <dbReference type="ChEBI" id="CHEBI:57498"/>
        <dbReference type="ChEBI" id="CHEBI:456216"/>
        <dbReference type="EC" id="2.4.1.21"/>
    </reaction>
</comment>
<comment type="pathway">
    <text evidence="1">Glycan biosynthesis; glycogen biosynthesis.</text>
</comment>
<comment type="similarity">
    <text evidence="1">Belongs to the glycosyltransferase 1 family. Bacterial/plant glycogen synthase subfamily.</text>
</comment>
<evidence type="ECO:0000255" key="1">
    <source>
        <dbReference type="HAMAP-Rule" id="MF_00484"/>
    </source>
</evidence>
<feature type="chain" id="PRO_1000135642" description="Glycogen synthase">
    <location>
        <begin position="1"/>
        <end position="480"/>
    </location>
</feature>
<feature type="binding site" evidence="1">
    <location>
        <position position="15"/>
    </location>
    <ligand>
        <name>ADP-alpha-D-glucose</name>
        <dbReference type="ChEBI" id="CHEBI:57498"/>
    </ligand>
</feature>
<gene>
    <name evidence="1" type="primary">glgA</name>
    <name type="ordered locus">Arad_3872</name>
</gene>